<comment type="function">
    <text evidence="1">One of the primary rRNA binding proteins, it binds specifically to the 5'-end of 16S ribosomal RNA.</text>
</comment>
<comment type="subunit">
    <text evidence="1">Part of the 30S ribosomal subunit.</text>
</comment>
<comment type="similarity">
    <text evidence="1">Belongs to the universal ribosomal protein uS17 family.</text>
</comment>
<proteinExistence type="inferred from homology"/>
<feature type="chain" id="PRO_0000233425" description="Small ribosomal subunit protein uS17">
    <location>
        <begin position="1"/>
        <end position="89"/>
    </location>
</feature>
<evidence type="ECO:0000255" key="1">
    <source>
        <dbReference type="HAMAP-Rule" id="MF_01345"/>
    </source>
</evidence>
<evidence type="ECO:0000305" key="2"/>
<reference key="1">
    <citation type="journal article" date="2004" name="Proc. Natl. Acad. Sci. U.S.A.">
        <title>Genomic analysis of Bacteroides fragilis reveals extensive DNA inversions regulating cell surface adaptation.</title>
        <authorList>
            <person name="Kuwahara T."/>
            <person name="Yamashita A."/>
            <person name="Hirakawa H."/>
            <person name="Nakayama H."/>
            <person name="Toh H."/>
            <person name="Okada N."/>
            <person name="Kuhara S."/>
            <person name="Hattori M."/>
            <person name="Hayashi T."/>
            <person name="Ohnishi Y."/>
        </authorList>
    </citation>
    <scope>NUCLEOTIDE SEQUENCE [LARGE SCALE GENOMIC DNA]</scope>
    <source>
        <strain>YCH46</strain>
    </source>
</reference>
<gene>
    <name evidence="1" type="primary">rpsQ</name>
    <name type="ordered locus">BF4172</name>
</gene>
<name>RS17_BACFR</name>
<dbReference type="EMBL" id="AP006841">
    <property type="protein sequence ID" value="BAD50915.1"/>
    <property type="molecule type" value="Genomic_DNA"/>
</dbReference>
<dbReference type="RefSeq" id="WP_008770213.1">
    <property type="nucleotide sequence ID" value="NZ_UYXF01000007.1"/>
</dbReference>
<dbReference type="RefSeq" id="YP_101449.1">
    <property type="nucleotide sequence ID" value="NC_006347.1"/>
</dbReference>
<dbReference type="SMR" id="Q64NL7"/>
<dbReference type="STRING" id="295405.BF4172"/>
<dbReference type="GeneID" id="60367435"/>
<dbReference type="KEGG" id="bfr:BF4172"/>
<dbReference type="PATRIC" id="fig|295405.11.peg.4026"/>
<dbReference type="HOGENOM" id="CLU_073626_1_1_10"/>
<dbReference type="OrthoDB" id="9811714at2"/>
<dbReference type="Proteomes" id="UP000002197">
    <property type="component" value="Chromosome"/>
</dbReference>
<dbReference type="GO" id="GO:0022627">
    <property type="term" value="C:cytosolic small ribosomal subunit"/>
    <property type="evidence" value="ECO:0007669"/>
    <property type="project" value="TreeGrafter"/>
</dbReference>
<dbReference type="GO" id="GO:0019843">
    <property type="term" value="F:rRNA binding"/>
    <property type="evidence" value="ECO:0007669"/>
    <property type="project" value="UniProtKB-UniRule"/>
</dbReference>
<dbReference type="GO" id="GO:0003735">
    <property type="term" value="F:structural constituent of ribosome"/>
    <property type="evidence" value="ECO:0007669"/>
    <property type="project" value="InterPro"/>
</dbReference>
<dbReference type="GO" id="GO:0006412">
    <property type="term" value="P:translation"/>
    <property type="evidence" value="ECO:0007669"/>
    <property type="project" value="UniProtKB-UniRule"/>
</dbReference>
<dbReference type="CDD" id="cd00364">
    <property type="entry name" value="Ribosomal_uS17"/>
    <property type="match status" value="1"/>
</dbReference>
<dbReference type="FunFam" id="2.40.50.140:FF:000123">
    <property type="entry name" value="30S ribosomal protein S17"/>
    <property type="match status" value="1"/>
</dbReference>
<dbReference type="Gene3D" id="2.40.50.140">
    <property type="entry name" value="Nucleic acid-binding proteins"/>
    <property type="match status" value="1"/>
</dbReference>
<dbReference type="HAMAP" id="MF_01345_B">
    <property type="entry name" value="Ribosomal_uS17_B"/>
    <property type="match status" value="1"/>
</dbReference>
<dbReference type="InterPro" id="IPR012340">
    <property type="entry name" value="NA-bd_OB-fold"/>
</dbReference>
<dbReference type="InterPro" id="IPR000266">
    <property type="entry name" value="Ribosomal_uS17"/>
</dbReference>
<dbReference type="InterPro" id="IPR019984">
    <property type="entry name" value="Ribosomal_uS17_bact/chlr"/>
</dbReference>
<dbReference type="InterPro" id="IPR019979">
    <property type="entry name" value="Ribosomal_uS17_CS"/>
</dbReference>
<dbReference type="NCBIfam" id="NF004123">
    <property type="entry name" value="PRK05610.1"/>
    <property type="match status" value="1"/>
</dbReference>
<dbReference type="NCBIfam" id="TIGR03635">
    <property type="entry name" value="uS17_bact"/>
    <property type="match status" value="1"/>
</dbReference>
<dbReference type="PANTHER" id="PTHR10744">
    <property type="entry name" value="40S RIBOSOMAL PROTEIN S11 FAMILY MEMBER"/>
    <property type="match status" value="1"/>
</dbReference>
<dbReference type="PANTHER" id="PTHR10744:SF1">
    <property type="entry name" value="SMALL RIBOSOMAL SUBUNIT PROTEIN US17M"/>
    <property type="match status" value="1"/>
</dbReference>
<dbReference type="Pfam" id="PF00366">
    <property type="entry name" value="Ribosomal_S17"/>
    <property type="match status" value="1"/>
</dbReference>
<dbReference type="PRINTS" id="PR00973">
    <property type="entry name" value="RIBOSOMALS17"/>
</dbReference>
<dbReference type="SUPFAM" id="SSF50249">
    <property type="entry name" value="Nucleic acid-binding proteins"/>
    <property type="match status" value="1"/>
</dbReference>
<dbReference type="PROSITE" id="PS00056">
    <property type="entry name" value="RIBOSOMAL_S17"/>
    <property type="match status" value="1"/>
</dbReference>
<keyword id="KW-0687">Ribonucleoprotein</keyword>
<keyword id="KW-0689">Ribosomal protein</keyword>
<keyword id="KW-0694">RNA-binding</keyword>
<keyword id="KW-0699">rRNA-binding</keyword>
<organism>
    <name type="scientific">Bacteroides fragilis (strain YCH46)</name>
    <dbReference type="NCBI Taxonomy" id="295405"/>
    <lineage>
        <taxon>Bacteria</taxon>
        <taxon>Pseudomonadati</taxon>
        <taxon>Bacteroidota</taxon>
        <taxon>Bacteroidia</taxon>
        <taxon>Bacteroidales</taxon>
        <taxon>Bacteroidaceae</taxon>
        <taxon>Bacteroides</taxon>
    </lineage>
</organism>
<sequence>MISLMEARNLRKERTGVVLSNKMEKTITVAAKFKEKHPIYGKFVSKTKKYHAHDEKNECNVGDTVRIMETRPLSKTKRWRLVEIIERAK</sequence>
<accession>Q64NL7</accession>
<protein>
    <recommendedName>
        <fullName evidence="1">Small ribosomal subunit protein uS17</fullName>
    </recommendedName>
    <alternativeName>
        <fullName evidence="2">30S ribosomal protein S17</fullName>
    </alternativeName>
</protein>